<name>DEFB1_PAPAN</name>
<evidence type="ECO:0000250" key="1"/>
<evidence type="ECO:0000250" key="2">
    <source>
        <dbReference type="UniProtKB" id="P60022"/>
    </source>
</evidence>
<evidence type="ECO:0000255" key="3"/>
<evidence type="ECO:0000305" key="4"/>
<feature type="signal peptide" evidence="3">
    <location>
        <begin position="1"/>
        <end position="21"/>
    </location>
</feature>
<feature type="propeptide" id="PRO_0000006913" evidence="1">
    <location>
        <begin position="22"/>
        <end position="32"/>
    </location>
</feature>
<feature type="peptide" id="PRO_0000006914" description="Beta-defensin 1">
    <location>
        <begin position="33"/>
        <end position="68"/>
    </location>
</feature>
<feature type="disulfide bond" evidence="1">
    <location>
        <begin position="37"/>
        <end position="66"/>
    </location>
</feature>
<feature type="disulfide bond" evidence="1">
    <location>
        <begin position="44"/>
        <end position="59"/>
    </location>
</feature>
<feature type="disulfide bond" evidence="1">
    <location>
        <begin position="49"/>
        <end position="67"/>
    </location>
</feature>
<comment type="function">
    <text evidence="2">Has bactericidal activity. May act as a ligand for C-C chemokine receptor CCR6. Positively regulates the sperm motility and bactericidal activity in a CCR6-dependent manner. Binds to CCR6 and triggers Ca2+ mobilization in the sperm which is important for its motility.</text>
</comment>
<comment type="subunit">
    <text evidence="2">Monomer. Homodimer.</text>
</comment>
<comment type="subcellular location">
    <subcellularLocation>
        <location evidence="2">Secreted</location>
    </subcellularLocation>
    <subcellularLocation>
        <location evidence="2">Membrane</location>
    </subcellularLocation>
    <text evidence="2">Associates with tumor cell membrane-derived microvesicles.</text>
</comment>
<comment type="similarity">
    <text evidence="4">Belongs to the beta-defensin family.</text>
</comment>
<proteinExistence type="inferred from homology"/>
<reference key="1">
    <citation type="journal article" date="2002" name="Immunogenetics">
        <title>Beta-defensin 1 gene variability among non-human primates.</title>
        <authorList>
            <person name="Del Pero M."/>
            <person name="Boniotto M."/>
            <person name="Zuccon D."/>
            <person name="Cervella P."/>
            <person name="Spano A."/>
            <person name="Amoroso A."/>
            <person name="Crovella S."/>
        </authorList>
    </citation>
    <scope>NUCLEOTIDE SEQUENCE [GENOMIC DNA]</scope>
</reference>
<sequence length="68" mass="7572">MRTSYLLLFTLCLLLSEMASGDNFLTGLGHRSDHYNCVRSGGQCLYSACPIYTRIQGTCYHGKAKCCK</sequence>
<protein>
    <recommendedName>
        <fullName>Beta-defensin 1</fullName>
        <shortName>BD-1</shortName>
    </recommendedName>
    <alternativeName>
        <fullName>Defensin, beta 1</fullName>
    </alternativeName>
</protein>
<accession>P61262</accession>
<keyword id="KW-0044">Antibiotic</keyword>
<keyword id="KW-0929">Antimicrobial</keyword>
<keyword id="KW-0211">Defensin</keyword>
<keyword id="KW-1015">Disulfide bond</keyword>
<keyword id="KW-0472">Membrane</keyword>
<keyword id="KW-1185">Reference proteome</keyword>
<keyword id="KW-0964">Secreted</keyword>
<keyword id="KW-0732">Signal</keyword>
<organism>
    <name type="scientific">Papio anubis</name>
    <name type="common">Olive baboon</name>
    <dbReference type="NCBI Taxonomy" id="9555"/>
    <lineage>
        <taxon>Eukaryota</taxon>
        <taxon>Metazoa</taxon>
        <taxon>Chordata</taxon>
        <taxon>Craniata</taxon>
        <taxon>Vertebrata</taxon>
        <taxon>Euteleostomi</taxon>
        <taxon>Mammalia</taxon>
        <taxon>Eutheria</taxon>
        <taxon>Euarchontoglires</taxon>
        <taxon>Primates</taxon>
        <taxon>Haplorrhini</taxon>
        <taxon>Catarrhini</taxon>
        <taxon>Cercopithecidae</taxon>
        <taxon>Cercopithecinae</taxon>
        <taxon>Papio</taxon>
    </lineage>
</organism>
<dbReference type="EMBL" id="AY033761">
    <property type="protein sequence ID" value="AAK61474.1"/>
    <property type="molecule type" value="Genomic_DNA"/>
</dbReference>
<dbReference type="EMBL" id="AY033747">
    <property type="protein sequence ID" value="AAK61474.1"/>
    <property type="status" value="JOINED"/>
    <property type="molecule type" value="Genomic_DNA"/>
</dbReference>
<dbReference type="RefSeq" id="XP_003902440.1">
    <property type="nucleotide sequence ID" value="XM_003902391.3"/>
</dbReference>
<dbReference type="SMR" id="P61262"/>
<dbReference type="STRING" id="9555.ENSPANP00000004965"/>
<dbReference type="Ensembl" id="ENSPANT00000021919.3">
    <property type="protein sequence ID" value="ENSPANP00000004965.1"/>
    <property type="gene ID" value="ENSPANG00000000904.3"/>
</dbReference>
<dbReference type="GeneID" id="100999102"/>
<dbReference type="KEGG" id="panu:100999102"/>
<dbReference type="CTD" id="1672"/>
<dbReference type="eggNOG" id="ENOG502TDMV">
    <property type="taxonomic scope" value="Eukaryota"/>
</dbReference>
<dbReference type="GeneTree" id="ENSGT00390000017014"/>
<dbReference type="HOGENOM" id="CLU_189296_1_0_1"/>
<dbReference type="OMA" id="SGKAKCC"/>
<dbReference type="OrthoDB" id="6920at314294"/>
<dbReference type="Proteomes" id="UP000028761">
    <property type="component" value="Chromosome 8"/>
</dbReference>
<dbReference type="Bgee" id="ENSPANG00000000904">
    <property type="expression patterns" value="Expressed in renal medulla and 49 other cell types or tissues"/>
</dbReference>
<dbReference type="GO" id="GO:0005615">
    <property type="term" value="C:extracellular space"/>
    <property type="evidence" value="ECO:0007669"/>
    <property type="project" value="Ensembl"/>
</dbReference>
<dbReference type="GO" id="GO:0016020">
    <property type="term" value="C:membrane"/>
    <property type="evidence" value="ECO:0000250"/>
    <property type="project" value="UniProtKB"/>
</dbReference>
<dbReference type="GO" id="GO:1990742">
    <property type="term" value="C:microvesicle"/>
    <property type="evidence" value="ECO:0000250"/>
    <property type="project" value="UniProtKB"/>
</dbReference>
<dbReference type="GO" id="GO:0097225">
    <property type="term" value="C:sperm midpiece"/>
    <property type="evidence" value="ECO:0000250"/>
    <property type="project" value="UniProtKB"/>
</dbReference>
<dbReference type="GO" id="GO:0031731">
    <property type="term" value="F:CCR6 chemokine receptor binding"/>
    <property type="evidence" value="ECO:0000250"/>
    <property type="project" value="UniProtKB"/>
</dbReference>
<dbReference type="GO" id="GO:0042802">
    <property type="term" value="F:identical protein binding"/>
    <property type="evidence" value="ECO:0000250"/>
    <property type="project" value="UniProtKB"/>
</dbReference>
<dbReference type="GO" id="GO:0019731">
    <property type="term" value="P:antibacterial humoral response"/>
    <property type="evidence" value="ECO:0007669"/>
    <property type="project" value="Ensembl"/>
</dbReference>
<dbReference type="GO" id="GO:0061844">
    <property type="term" value="P:antimicrobial humoral immune response mediated by antimicrobial peptide"/>
    <property type="evidence" value="ECO:0007669"/>
    <property type="project" value="Ensembl"/>
</dbReference>
<dbReference type="GO" id="GO:0019722">
    <property type="term" value="P:calcium-mediated signaling"/>
    <property type="evidence" value="ECO:0000250"/>
    <property type="project" value="UniProtKB"/>
</dbReference>
<dbReference type="GO" id="GO:0050829">
    <property type="term" value="P:defense response to Gram-negative bacterium"/>
    <property type="evidence" value="ECO:0000250"/>
    <property type="project" value="UniProtKB"/>
</dbReference>
<dbReference type="GO" id="GO:0050830">
    <property type="term" value="P:defense response to Gram-positive bacterium"/>
    <property type="evidence" value="ECO:0000250"/>
    <property type="project" value="UniProtKB"/>
</dbReference>
<dbReference type="GO" id="GO:0002227">
    <property type="term" value="P:innate immune response in mucosa"/>
    <property type="evidence" value="ECO:0007669"/>
    <property type="project" value="Ensembl"/>
</dbReference>
<dbReference type="GO" id="GO:0060474">
    <property type="term" value="P:positive regulation of flagellated sperm motility involved in capacitation"/>
    <property type="evidence" value="ECO:0000250"/>
    <property type="project" value="UniProtKB"/>
</dbReference>
<dbReference type="FunFam" id="3.10.360.10:FF:000001">
    <property type="entry name" value="Beta-defensin 1"/>
    <property type="match status" value="1"/>
</dbReference>
<dbReference type="Gene3D" id="3.10.360.10">
    <property type="entry name" value="Antimicrobial Peptide, Beta-defensin 2, Chain A"/>
    <property type="match status" value="1"/>
</dbReference>
<dbReference type="InterPro" id="IPR001855">
    <property type="entry name" value="Defensin_beta-like"/>
</dbReference>
<dbReference type="PANTHER" id="PTHR21388:SF9">
    <property type="entry name" value="BETA-DEFENSIN 1"/>
    <property type="match status" value="1"/>
</dbReference>
<dbReference type="PANTHER" id="PTHR21388">
    <property type="entry name" value="BETA-DEFENSIN-RELATED"/>
    <property type="match status" value="1"/>
</dbReference>
<dbReference type="Pfam" id="PF00711">
    <property type="entry name" value="Defensin_beta"/>
    <property type="match status" value="1"/>
</dbReference>
<dbReference type="SUPFAM" id="SSF57392">
    <property type="entry name" value="Defensin-like"/>
    <property type="match status" value="1"/>
</dbReference>
<gene>
    <name type="primary">DEFB1</name>
</gene>